<feature type="chain" id="PRO_1000197449" description="Urease accessory protein UreE">
    <location>
        <begin position="1"/>
        <end position="172"/>
    </location>
</feature>
<name>UREE_SHEHH</name>
<sequence length="172" mass="18869">MIKLTQILTEVPSVDAKVCLTMVQRTKSRLRIVLEDGQDAGLLLPRGHILHHGSLLSTDDGFVVEVVAAKEQVSTARSDNPTLFAKGCYHLGNRHVPLQVEAGWCRYQHDYVLDEMLIGLGLQVTVENEAFQPEAGAYGGTTGGHSHGDAYDDSLEKASHEHAHGHPHKHEH</sequence>
<accession>B0TT72</accession>
<gene>
    <name evidence="1" type="primary">ureE</name>
    <name type="ordered locus">Shal_3468</name>
</gene>
<evidence type="ECO:0000255" key="1">
    <source>
        <dbReference type="HAMAP-Rule" id="MF_00822"/>
    </source>
</evidence>
<organism>
    <name type="scientific">Shewanella halifaxensis (strain HAW-EB4)</name>
    <dbReference type="NCBI Taxonomy" id="458817"/>
    <lineage>
        <taxon>Bacteria</taxon>
        <taxon>Pseudomonadati</taxon>
        <taxon>Pseudomonadota</taxon>
        <taxon>Gammaproteobacteria</taxon>
        <taxon>Alteromonadales</taxon>
        <taxon>Shewanellaceae</taxon>
        <taxon>Shewanella</taxon>
    </lineage>
</organism>
<dbReference type="EMBL" id="CP000931">
    <property type="protein sequence ID" value="ABZ78013.1"/>
    <property type="molecule type" value="Genomic_DNA"/>
</dbReference>
<dbReference type="RefSeq" id="WP_012278533.1">
    <property type="nucleotide sequence ID" value="NC_010334.1"/>
</dbReference>
<dbReference type="SMR" id="B0TT72"/>
<dbReference type="STRING" id="458817.Shal_3468"/>
<dbReference type="KEGG" id="shl:Shal_3468"/>
<dbReference type="eggNOG" id="COG2371">
    <property type="taxonomic scope" value="Bacteria"/>
</dbReference>
<dbReference type="HOGENOM" id="CLU_093757_2_0_6"/>
<dbReference type="OrthoDB" id="5421304at2"/>
<dbReference type="Proteomes" id="UP000001317">
    <property type="component" value="Chromosome"/>
</dbReference>
<dbReference type="GO" id="GO:0005737">
    <property type="term" value="C:cytoplasm"/>
    <property type="evidence" value="ECO:0007669"/>
    <property type="project" value="UniProtKB-SubCell"/>
</dbReference>
<dbReference type="GO" id="GO:0016151">
    <property type="term" value="F:nickel cation binding"/>
    <property type="evidence" value="ECO:0007669"/>
    <property type="project" value="UniProtKB-UniRule"/>
</dbReference>
<dbReference type="GO" id="GO:0051082">
    <property type="term" value="F:unfolded protein binding"/>
    <property type="evidence" value="ECO:0007669"/>
    <property type="project" value="UniProtKB-UniRule"/>
</dbReference>
<dbReference type="GO" id="GO:0006457">
    <property type="term" value="P:protein folding"/>
    <property type="evidence" value="ECO:0007669"/>
    <property type="project" value="InterPro"/>
</dbReference>
<dbReference type="GO" id="GO:0065003">
    <property type="term" value="P:protein-containing complex assembly"/>
    <property type="evidence" value="ECO:0007669"/>
    <property type="project" value="InterPro"/>
</dbReference>
<dbReference type="GO" id="GO:0019627">
    <property type="term" value="P:urea metabolic process"/>
    <property type="evidence" value="ECO:0007669"/>
    <property type="project" value="InterPro"/>
</dbReference>
<dbReference type="CDD" id="cd00571">
    <property type="entry name" value="UreE"/>
    <property type="match status" value="1"/>
</dbReference>
<dbReference type="Gene3D" id="2.60.260.20">
    <property type="entry name" value="Urease metallochaperone UreE, N-terminal domain"/>
    <property type="match status" value="1"/>
</dbReference>
<dbReference type="Gene3D" id="3.30.70.790">
    <property type="entry name" value="UreE, C-terminal domain"/>
    <property type="match status" value="1"/>
</dbReference>
<dbReference type="HAMAP" id="MF_00822">
    <property type="entry name" value="UreE"/>
    <property type="match status" value="1"/>
</dbReference>
<dbReference type="InterPro" id="IPR012406">
    <property type="entry name" value="UreE"/>
</dbReference>
<dbReference type="InterPro" id="IPR007864">
    <property type="entry name" value="UreE_C_dom"/>
</dbReference>
<dbReference type="InterPro" id="IPR004029">
    <property type="entry name" value="UreE_N"/>
</dbReference>
<dbReference type="InterPro" id="IPR036118">
    <property type="entry name" value="UreE_N_sf"/>
</dbReference>
<dbReference type="NCBIfam" id="NF009751">
    <property type="entry name" value="PRK13261.1-1"/>
    <property type="match status" value="1"/>
</dbReference>
<dbReference type="Pfam" id="PF05194">
    <property type="entry name" value="UreE_C"/>
    <property type="match status" value="1"/>
</dbReference>
<dbReference type="Pfam" id="PF02814">
    <property type="entry name" value="UreE_N"/>
    <property type="match status" value="1"/>
</dbReference>
<dbReference type="PIRSF" id="PIRSF036402">
    <property type="entry name" value="Ureas_acces_UreE"/>
    <property type="match status" value="1"/>
</dbReference>
<dbReference type="SMART" id="SM00988">
    <property type="entry name" value="UreE_N"/>
    <property type="match status" value="1"/>
</dbReference>
<dbReference type="SUPFAM" id="SSF69737">
    <property type="entry name" value="Urease metallochaperone UreE, C-terminal domain"/>
    <property type="match status" value="1"/>
</dbReference>
<dbReference type="SUPFAM" id="SSF69287">
    <property type="entry name" value="Urease metallochaperone UreE, N-terminal domain"/>
    <property type="match status" value="1"/>
</dbReference>
<proteinExistence type="inferred from homology"/>
<protein>
    <recommendedName>
        <fullName evidence="1">Urease accessory protein UreE</fullName>
    </recommendedName>
</protein>
<reference key="1">
    <citation type="submission" date="2008-01" db="EMBL/GenBank/DDBJ databases">
        <title>Complete sequence of Shewanella halifaxensis HAW-EB4.</title>
        <authorList>
            <consortium name="US DOE Joint Genome Institute"/>
            <person name="Copeland A."/>
            <person name="Lucas S."/>
            <person name="Lapidus A."/>
            <person name="Glavina del Rio T."/>
            <person name="Dalin E."/>
            <person name="Tice H."/>
            <person name="Bruce D."/>
            <person name="Goodwin L."/>
            <person name="Pitluck S."/>
            <person name="Sims D."/>
            <person name="Brettin T."/>
            <person name="Detter J.C."/>
            <person name="Han C."/>
            <person name="Kuske C.R."/>
            <person name="Schmutz J."/>
            <person name="Larimer F."/>
            <person name="Land M."/>
            <person name="Hauser L."/>
            <person name="Kyrpides N."/>
            <person name="Kim E."/>
            <person name="Zhao J.-S."/>
            <person name="Richardson P."/>
        </authorList>
    </citation>
    <scope>NUCLEOTIDE SEQUENCE [LARGE SCALE GENOMIC DNA]</scope>
    <source>
        <strain>HAW-EB4</strain>
    </source>
</reference>
<keyword id="KW-0143">Chaperone</keyword>
<keyword id="KW-0963">Cytoplasm</keyword>
<keyword id="KW-0533">Nickel</keyword>
<comment type="function">
    <text evidence="1">Involved in urease metallocenter assembly. Binds nickel. Probably functions as a nickel donor during metallocenter assembly.</text>
</comment>
<comment type="subcellular location">
    <subcellularLocation>
        <location evidence="1">Cytoplasm</location>
    </subcellularLocation>
</comment>
<comment type="similarity">
    <text evidence="1">Belongs to the UreE family.</text>
</comment>